<dbReference type="EC" id="3.1.26.5" evidence="1"/>
<dbReference type="EMBL" id="M58352">
    <property type="protein sequence ID" value="AAA83956.1"/>
    <property type="molecule type" value="Genomic_DNA"/>
</dbReference>
<dbReference type="PIR" id="JQ0731">
    <property type="entry name" value="JQ0731"/>
</dbReference>
<dbReference type="RefSeq" id="WP_004246510.1">
    <property type="nucleotide sequence ID" value="NZ_WURR01000008.1"/>
</dbReference>
<dbReference type="SMR" id="P22835"/>
<dbReference type="STRING" id="584.AOUC001_19005"/>
<dbReference type="GeneID" id="6801297"/>
<dbReference type="PATRIC" id="fig|584.131.peg.160"/>
<dbReference type="OMA" id="LHQHELP"/>
<dbReference type="OrthoDB" id="9796422at2"/>
<dbReference type="GO" id="GO:0030677">
    <property type="term" value="C:ribonuclease P complex"/>
    <property type="evidence" value="ECO:0007669"/>
    <property type="project" value="TreeGrafter"/>
</dbReference>
<dbReference type="GO" id="GO:0042781">
    <property type="term" value="F:3'-tRNA processing endoribonuclease activity"/>
    <property type="evidence" value="ECO:0007669"/>
    <property type="project" value="TreeGrafter"/>
</dbReference>
<dbReference type="GO" id="GO:0004526">
    <property type="term" value="F:ribonuclease P activity"/>
    <property type="evidence" value="ECO:0007669"/>
    <property type="project" value="UniProtKB-UniRule"/>
</dbReference>
<dbReference type="GO" id="GO:0000049">
    <property type="term" value="F:tRNA binding"/>
    <property type="evidence" value="ECO:0007669"/>
    <property type="project" value="UniProtKB-UniRule"/>
</dbReference>
<dbReference type="GO" id="GO:0001682">
    <property type="term" value="P:tRNA 5'-leader removal"/>
    <property type="evidence" value="ECO:0007669"/>
    <property type="project" value="UniProtKB-UniRule"/>
</dbReference>
<dbReference type="FunFam" id="3.30.230.10:FF:000016">
    <property type="entry name" value="Ribonuclease P protein component"/>
    <property type="match status" value="1"/>
</dbReference>
<dbReference type="Gene3D" id="3.30.230.10">
    <property type="match status" value="1"/>
</dbReference>
<dbReference type="HAMAP" id="MF_00227">
    <property type="entry name" value="RNase_P"/>
    <property type="match status" value="1"/>
</dbReference>
<dbReference type="InterPro" id="IPR020568">
    <property type="entry name" value="Ribosomal_Su5_D2-typ_SF"/>
</dbReference>
<dbReference type="InterPro" id="IPR014721">
    <property type="entry name" value="Ribsml_uS5_D2-typ_fold_subgr"/>
</dbReference>
<dbReference type="InterPro" id="IPR000100">
    <property type="entry name" value="RNase_P"/>
</dbReference>
<dbReference type="InterPro" id="IPR020539">
    <property type="entry name" value="RNase_P_CS"/>
</dbReference>
<dbReference type="NCBIfam" id="TIGR00188">
    <property type="entry name" value="rnpA"/>
    <property type="match status" value="1"/>
</dbReference>
<dbReference type="PANTHER" id="PTHR33992">
    <property type="entry name" value="RIBONUCLEASE P PROTEIN COMPONENT"/>
    <property type="match status" value="1"/>
</dbReference>
<dbReference type="PANTHER" id="PTHR33992:SF1">
    <property type="entry name" value="RIBONUCLEASE P PROTEIN COMPONENT"/>
    <property type="match status" value="1"/>
</dbReference>
<dbReference type="Pfam" id="PF00825">
    <property type="entry name" value="Ribonuclease_P"/>
    <property type="match status" value="1"/>
</dbReference>
<dbReference type="SUPFAM" id="SSF54211">
    <property type="entry name" value="Ribosomal protein S5 domain 2-like"/>
    <property type="match status" value="1"/>
</dbReference>
<dbReference type="PROSITE" id="PS00648">
    <property type="entry name" value="RIBONUCLEASE_P"/>
    <property type="match status" value="1"/>
</dbReference>
<sequence length="119" mass="14060">MVKLAFPRELRLLTPKHFNFVFQQPQRASSPEVTILGRQNELGHPRIGLTIAKKNVKRAHERNRIKRLAREYFRLHQHQLPAMDFVVLVRKGVAELDNHQLTEVLGKLWRRHCRLAQKS</sequence>
<accession>P22835</accession>
<comment type="function">
    <text evidence="1">RNaseP catalyzes the removal of the 5'-leader sequence from pre-tRNA to produce the mature 5'-terminus. It can also cleave other RNA substrates such as 4.5S RNA. The protein component plays an auxiliary but essential role in vivo by binding to the 5'-leader sequence and broadening the substrate specificity of the ribozyme.</text>
</comment>
<comment type="catalytic activity">
    <reaction evidence="1">
        <text>Endonucleolytic cleavage of RNA, removing 5'-extranucleotides from tRNA precursor.</text>
        <dbReference type="EC" id="3.1.26.5"/>
    </reaction>
</comment>
<comment type="subunit">
    <text evidence="1">Consists of a catalytic RNA component (M1 or rnpB) and a protein subunit.</text>
</comment>
<comment type="similarity">
    <text evidence="1">Belongs to the RnpA family.</text>
</comment>
<reference key="1">
    <citation type="journal article" date="1990" name="Gene">
        <title>Nucleotide sequence of a Proteus mirabilis DNA fragment homologous to the 60K-rnpA-rpmH-dnaA-dnaN-recF-gyrB region of Escherichia coli.</title>
        <authorList>
            <person name="Skovgaard O."/>
        </authorList>
    </citation>
    <scope>NUCLEOTIDE SEQUENCE [GENOMIC DNA]</scope>
    <source>
        <strain>LM1509</strain>
    </source>
</reference>
<name>RNPA_PROMI</name>
<proteinExistence type="inferred from homology"/>
<feature type="chain" id="PRO_0000198507" description="Ribonuclease P protein component">
    <location>
        <begin position="1"/>
        <end position="119"/>
    </location>
</feature>
<gene>
    <name evidence="1" type="primary">rnpA</name>
</gene>
<protein>
    <recommendedName>
        <fullName evidence="1">Ribonuclease P protein component</fullName>
        <shortName evidence="1">RNase P protein</shortName>
        <shortName evidence="1">RNaseP protein</shortName>
        <ecNumber evidence="1">3.1.26.5</ecNumber>
    </recommendedName>
    <alternativeName>
        <fullName evidence="1">Protein C5</fullName>
    </alternativeName>
</protein>
<organism>
    <name type="scientific">Proteus mirabilis</name>
    <dbReference type="NCBI Taxonomy" id="584"/>
    <lineage>
        <taxon>Bacteria</taxon>
        <taxon>Pseudomonadati</taxon>
        <taxon>Pseudomonadota</taxon>
        <taxon>Gammaproteobacteria</taxon>
        <taxon>Enterobacterales</taxon>
        <taxon>Morganellaceae</taxon>
        <taxon>Proteus</taxon>
    </lineage>
</organism>
<keyword id="KW-0255">Endonuclease</keyword>
<keyword id="KW-0378">Hydrolase</keyword>
<keyword id="KW-0540">Nuclease</keyword>
<keyword id="KW-0694">RNA-binding</keyword>
<keyword id="KW-0819">tRNA processing</keyword>
<evidence type="ECO:0000255" key="1">
    <source>
        <dbReference type="HAMAP-Rule" id="MF_00227"/>
    </source>
</evidence>